<name>COAE_BACCR</name>
<dbReference type="EC" id="2.7.1.24" evidence="1"/>
<dbReference type="EMBL" id="AE016877">
    <property type="protein sequence ID" value="AAP11491.1"/>
    <property type="molecule type" value="Genomic_DNA"/>
</dbReference>
<dbReference type="RefSeq" id="NP_834290.1">
    <property type="nucleotide sequence ID" value="NC_004722.1"/>
</dbReference>
<dbReference type="RefSeq" id="WP_000219314.1">
    <property type="nucleotide sequence ID" value="NZ_CP138336.1"/>
</dbReference>
<dbReference type="SMR" id="Q817G7"/>
<dbReference type="STRING" id="226900.BC_4584"/>
<dbReference type="KEGG" id="bce:BC4584"/>
<dbReference type="PATRIC" id="fig|226900.8.peg.4746"/>
<dbReference type="HOGENOM" id="CLU_057180_0_0_9"/>
<dbReference type="OrthoDB" id="9812943at2"/>
<dbReference type="UniPathway" id="UPA00241">
    <property type="reaction ID" value="UER00356"/>
</dbReference>
<dbReference type="Proteomes" id="UP000001417">
    <property type="component" value="Chromosome"/>
</dbReference>
<dbReference type="GO" id="GO:0005737">
    <property type="term" value="C:cytoplasm"/>
    <property type="evidence" value="ECO:0007669"/>
    <property type="project" value="UniProtKB-SubCell"/>
</dbReference>
<dbReference type="GO" id="GO:0005524">
    <property type="term" value="F:ATP binding"/>
    <property type="evidence" value="ECO:0007669"/>
    <property type="project" value="UniProtKB-UniRule"/>
</dbReference>
<dbReference type="GO" id="GO:0004140">
    <property type="term" value="F:dephospho-CoA kinase activity"/>
    <property type="evidence" value="ECO:0000318"/>
    <property type="project" value="GO_Central"/>
</dbReference>
<dbReference type="GO" id="GO:0015937">
    <property type="term" value="P:coenzyme A biosynthetic process"/>
    <property type="evidence" value="ECO:0000318"/>
    <property type="project" value="GO_Central"/>
</dbReference>
<dbReference type="CDD" id="cd02022">
    <property type="entry name" value="DPCK"/>
    <property type="match status" value="1"/>
</dbReference>
<dbReference type="FunFam" id="3.40.50.300:FF:000485">
    <property type="entry name" value="Dephospho-CoA kinase CAB5"/>
    <property type="match status" value="1"/>
</dbReference>
<dbReference type="Gene3D" id="3.40.50.300">
    <property type="entry name" value="P-loop containing nucleotide triphosphate hydrolases"/>
    <property type="match status" value="1"/>
</dbReference>
<dbReference type="HAMAP" id="MF_00376">
    <property type="entry name" value="Dephospho_CoA_kinase"/>
    <property type="match status" value="1"/>
</dbReference>
<dbReference type="InterPro" id="IPR001977">
    <property type="entry name" value="Depp_CoAkinase"/>
</dbReference>
<dbReference type="InterPro" id="IPR027417">
    <property type="entry name" value="P-loop_NTPase"/>
</dbReference>
<dbReference type="NCBIfam" id="TIGR00152">
    <property type="entry name" value="dephospho-CoA kinase"/>
    <property type="match status" value="1"/>
</dbReference>
<dbReference type="PANTHER" id="PTHR10695:SF46">
    <property type="entry name" value="BIFUNCTIONAL COENZYME A SYNTHASE-RELATED"/>
    <property type="match status" value="1"/>
</dbReference>
<dbReference type="PANTHER" id="PTHR10695">
    <property type="entry name" value="DEPHOSPHO-COA KINASE-RELATED"/>
    <property type="match status" value="1"/>
</dbReference>
<dbReference type="Pfam" id="PF01121">
    <property type="entry name" value="CoaE"/>
    <property type="match status" value="1"/>
</dbReference>
<dbReference type="SUPFAM" id="SSF52540">
    <property type="entry name" value="P-loop containing nucleoside triphosphate hydrolases"/>
    <property type="match status" value="1"/>
</dbReference>
<dbReference type="PROSITE" id="PS51219">
    <property type="entry name" value="DPCK"/>
    <property type="match status" value="1"/>
</dbReference>
<accession>Q817G7</accession>
<comment type="function">
    <text evidence="1">Catalyzes the phosphorylation of the 3'-hydroxyl group of dephosphocoenzyme A to form coenzyme A.</text>
</comment>
<comment type="catalytic activity">
    <reaction evidence="1">
        <text>3'-dephospho-CoA + ATP = ADP + CoA + H(+)</text>
        <dbReference type="Rhea" id="RHEA:18245"/>
        <dbReference type="ChEBI" id="CHEBI:15378"/>
        <dbReference type="ChEBI" id="CHEBI:30616"/>
        <dbReference type="ChEBI" id="CHEBI:57287"/>
        <dbReference type="ChEBI" id="CHEBI:57328"/>
        <dbReference type="ChEBI" id="CHEBI:456216"/>
        <dbReference type="EC" id="2.7.1.24"/>
    </reaction>
</comment>
<comment type="pathway">
    <text evidence="1">Cofactor biosynthesis; coenzyme A biosynthesis; CoA from (R)-pantothenate: step 5/5.</text>
</comment>
<comment type="subcellular location">
    <subcellularLocation>
        <location evidence="1">Cytoplasm</location>
    </subcellularLocation>
</comment>
<comment type="similarity">
    <text evidence="1">Belongs to the CoaE family.</text>
</comment>
<protein>
    <recommendedName>
        <fullName evidence="1">Dephospho-CoA kinase</fullName>
        <ecNumber evidence="1">2.7.1.24</ecNumber>
    </recommendedName>
    <alternativeName>
        <fullName evidence="1">Dephosphocoenzyme A kinase</fullName>
    </alternativeName>
</protein>
<reference key="1">
    <citation type="journal article" date="2003" name="Nature">
        <title>Genome sequence of Bacillus cereus and comparative analysis with Bacillus anthracis.</title>
        <authorList>
            <person name="Ivanova N."/>
            <person name="Sorokin A."/>
            <person name="Anderson I."/>
            <person name="Galleron N."/>
            <person name="Candelon B."/>
            <person name="Kapatral V."/>
            <person name="Bhattacharyya A."/>
            <person name="Reznik G."/>
            <person name="Mikhailova N."/>
            <person name="Lapidus A."/>
            <person name="Chu L."/>
            <person name="Mazur M."/>
            <person name="Goltsman E."/>
            <person name="Larsen N."/>
            <person name="D'Souza M."/>
            <person name="Walunas T."/>
            <person name="Grechkin Y."/>
            <person name="Pusch G."/>
            <person name="Haselkorn R."/>
            <person name="Fonstein M."/>
            <person name="Ehrlich S.D."/>
            <person name="Overbeek R."/>
            <person name="Kyrpides N.C."/>
        </authorList>
    </citation>
    <scope>NUCLEOTIDE SEQUENCE [LARGE SCALE GENOMIC DNA]</scope>
    <source>
        <strain>ATCC 14579 / DSM 31 / CCUG 7414 / JCM 2152 / NBRC 15305 / NCIMB 9373 / NCTC 2599 / NRRL B-3711</strain>
    </source>
</reference>
<gene>
    <name evidence="1" type="primary">coaE</name>
    <name type="ordered locus">BC_4584</name>
</gene>
<evidence type="ECO:0000255" key="1">
    <source>
        <dbReference type="HAMAP-Rule" id="MF_00376"/>
    </source>
</evidence>
<sequence length="200" mass="22672">MTVVIGLTGGIASGKSTVSQMFRELSIPVIDADIIAREVVERGKPAYNKIVEVFGTEVLQEDGELDRPKLGSVVFYNEEKRLQLNKIVHPAVREEMNRQKEMYIKEGMQAVVLDIPLLFESKLTSLVDRILVVAVKPHTQLERLMKRNNFLEEEATARIQSQMPLEEKVKNADEVINNDGTIMGTKTQLQVILKKWNIID</sequence>
<organism>
    <name type="scientific">Bacillus cereus (strain ATCC 14579 / DSM 31 / CCUG 7414 / JCM 2152 / NBRC 15305 / NCIMB 9373 / NCTC 2599 / NRRL B-3711)</name>
    <dbReference type="NCBI Taxonomy" id="226900"/>
    <lineage>
        <taxon>Bacteria</taxon>
        <taxon>Bacillati</taxon>
        <taxon>Bacillota</taxon>
        <taxon>Bacilli</taxon>
        <taxon>Bacillales</taxon>
        <taxon>Bacillaceae</taxon>
        <taxon>Bacillus</taxon>
        <taxon>Bacillus cereus group</taxon>
    </lineage>
</organism>
<proteinExistence type="inferred from homology"/>
<keyword id="KW-0067">ATP-binding</keyword>
<keyword id="KW-0173">Coenzyme A biosynthesis</keyword>
<keyword id="KW-0963">Cytoplasm</keyword>
<keyword id="KW-0418">Kinase</keyword>
<keyword id="KW-0547">Nucleotide-binding</keyword>
<keyword id="KW-1185">Reference proteome</keyword>
<keyword id="KW-0808">Transferase</keyword>
<feature type="chain" id="PRO_0000172903" description="Dephospho-CoA kinase">
    <location>
        <begin position="1"/>
        <end position="200"/>
    </location>
</feature>
<feature type="domain" description="DPCK" evidence="1">
    <location>
        <begin position="4"/>
        <end position="200"/>
    </location>
</feature>
<feature type="binding site" evidence="1">
    <location>
        <begin position="12"/>
        <end position="17"/>
    </location>
    <ligand>
        <name>ATP</name>
        <dbReference type="ChEBI" id="CHEBI:30616"/>
    </ligand>
</feature>